<evidence type="ECO:0000255" key="1">
    <source>
        <dbReference type="HAMAP-Rule" id="MF_00337"/>
    </source>
</evidence>
<evidence type="ECO:0000256" key="2">
    <source>
        <dbReference type="SAM" id="MobiDB-lite"/>
    </source>
</evidence>
<name>EX7S_DESDA</name>
<proteinExistence type="inferred from homology"/>
<organism>
    <name type="scientific">Desulfovibrio desulfuricans (strain ATCC 27774 / DSM 6949 / MB)</name>
    <dbReference type="NCBI Taxonomy" id="525146"/>
    <lineage>
        <taxon>Bacteria</taxon>
        <taxon>Pseudomonadati</taxon>
        <taxon>Thermodesulfobacteriota</taxon>
        <taxon>Desulfovibrionia</taxon>
        <taxon>Desulfovibrionales</taxon>
        <taxon>Desulfovibrionaceae</taxon>
        <taxon>Desulfovibrio</taxon>
    </lineage>
</organism>
<feature type="chain" id="PRO_1000200249" description="Exodeoxyribonuclease 7 small subunit">
    <location>
        <begin position="1"/>
        <end position="90"/>
    </location>
</feature>
<feature type="region of interest" description="Disordered" evidence="2">
    <location>
        <begin position="62"/>
        <end position="90"/>
    </location>
</feature>
<feature type="compositionally biased region" description="Polar residues" evidence="2">
    <location>
        <begin position="64"/>
        <end position="74"/>
    </location>
</feature>
<feature type="compositionally biased region" description="Acidic residues" evidence="2">
    <location>
        <begin position="79"/>
        <end position="90"/>
    </location>
</feature>
<sequence length="90" mass="10027">MSAKNDNLFEKKLARLQEIVGALESGDLPLEKGMALYKEGATCARYCRQQLDKARHELEIWQDGQANPMSSQGHTAGEYPDDEAEEAEEA</sequence>
<reference key="1">
    <citation type="submission" date="2009-01" db="EMBL/GenBank/DDBJ databases">
        <title>Complete sequence of Desulfovibrio desulfuricans subsp. desulfuricans str. ATCC 27774.</title>
        <authorList>
            <consortium name="US DOE Joint Genome Institute"/>
            <person name="Lucas S."/>
            <person name="Copeland A."/>
            <person name="Lapidus A."/>
            <person name="Glavina del Rio T."/>
            <person name="Tice H."/>
            <person name="Bruce D."/>
            <person name="Goodwin L."/>
            <person name="Pitluck S."/>
            <person name="Sims D."/>
            <person name="Lu M."/>
            <person name="Kiss H."/>
            <person name="Meineke L."/>
            <person name="Brettin T."/>
            <person name="Detter J.C."/>
            <person name="Han C."/>
            <person name="Larimer F."/>
            <person name="Land M."/>
            <person name="Hauser L."/>
            <person name="Kyrpides N."/>
            <person name="Ovchinnikova G."/>
            <person name="Hazen T.C."/>
        </authorList>
    </citation>
    <scope>NUCLEOTIDE SEQUENCE [LARGE SCALE GENOMIC DNA]</scope>
    <source>
        <strain>ATCC 27774 / DSM 6949 / MB</strain>
    </source>
</reference>
<keyword id="KW-0963">Cytoplasm</keyword>
<keyword id="KW-0269">Exonuclease</keyword>
<keyword id="KW-0378">Hydrolase</keyword>
<keyword id="KW-0540">Nuclease</keyword>
<gene>
    <name evidence="1" type="primary">xseB</name>
    <name type="ordered locus">Ddes_0954</name>
</gene>
<protein>
    <recommendedName>
        <fullName evidence="1">Exodeoxyribonuclease 7 small subunit</fullName>
        <ecNumber evidence="1">3.1.11.6</ecNumber>
    </recommendedName>
    <alternativeName>
        <fullName evidence="1">Exodeoxyribonuclease VII small subunit</fullName>
        <shortName evidence="1">Exonuclease VII small subunit</shortName>
    </alternativeName>
</protein>
<dbReference type="EC" id="3.1.11.6" evidence="1"/>
<dbReference type="EMBL" id="CP001358">
    <property type="protein sequence ID" value="ACL48861.1"/>
    <property type="molecule type" value="Genomic_DNA"/>
</dbReference>
<dbReference type="SMR" id="B8IZD4"/>
<dbReference type="STRING" id="525146.Ddes_0954"/>
<dbReference type="KEGG" id="dds:Ddes_0954"/>
<dbReference type="eggNOG" id="COG1722">
    <property type="taxonomic scope" value="Bacteria"/>
</dbReference>
<dbReference type="HOGENOM" id="CLU_145918_2_2_7"/>
<dbReference type="GO" id="GO:0005829">
    <property type="term" value="C:cytosol"/>
    <property type="evidence" value="ECO:0007669"/>
    <property type="project" value="TreeGrafter"/>
</dbReference>
<dbReference type="GO" id="GO:0009318">
    <property type="term" value="C:exodeoxyribonuclease VII complex"/>
    <property type="evidence" value="ECO:0007669"/>
    <property type="project" value="InterPro"/>
</dbReference>
<dbReference type="GO" id="GO:0008855">
    <property type="term" value="F:exodeoxyribonuclease VII activity"/>
    <property type="evidence" value="ECO:0007669"/>
    <property type="project" value="UniProtKB-UniRule"/>
</dbReference>
<dbReference type="GO" id="GO:0006308">
    <property type="term" value="P:DNA catabolic process"/>
    <property type="evidence" value="ECO:0007669"/>
    <property type="project" value="UniProtKB-UniRule"/>
</dbReference>
<dbReference type="Gene3D" id="1.10.287.1040">
    <property type="entry name" value="Exonuclease VII, small subunit"/>
    <property type="match status" value="1"/>
</dbReference>
<dbReference type="HAMAP" id="MF_00337">
    <property type="entry name" value="Exonuc_7_S"/>
    <property type="match status" value="1"/>
</dbReference>
<dbReference type="InterPro" id="IPR003761">
    <property type="entry name" value="Exonuc_VII_S"/>
</dbReference>
<dbReference type="InterPro" id="IPR037004">
    <property type="entry name" value="Exonuc_VII_ssu_sf"/>
</dbReference>
<dbReference type="NCBIfam" id="TIGR01280">
    <property type="entry name" value="xseB"/>
    <property type="match status" value="1"/>
</dbReference>
<dbReference type="PANTHER" id="PTHR34137">
    <property type="entry name" value="EXODEOXYRIBONUCLEASE 7 SMALL SUBUNIT"/>
    <property type="match status" value="1"/>
</dbReference>
<dbReference type="PANTHER" id="PTHR34137:SF1">
    <property type="entry name" value="EXODEOXYRIBONUCLEASE 7 SMALL SUBUNIT"/>
    <property type="match status" value="1"/>
</dbReference>
<dbReference type="Pfam" id="PF02609">
    <property type="entry name" value="Exonuc_VII_S"/>
    <property type="match status" value="1"/>
</dbReference>
<dbReference type="SUPFAM" id="SSF116842">
    <property type="entry name" value="XseB-like"/>
    <property type="match status" value="1"/>
</dbReference>
<accession>B8IZD4</accession>
<comment type="function">
    <text evidence="1">Bidirectionally degrades single-stranded DNA into large acid-insoluble oligonucleotides, which are then degraded further into small acid-soluble oligonucleotides.</text>
</comment>
<comment type="catalytic activity">
    <reaction evidence="1">
        <text>Exonucleolytic cleavage in either 5'- to 3'- or 3'- to 5'-direction to yield nucleoside 5'-phosphates.</text>
        <dbReference type="EC" id="3.1.11.6"/>
    </reaction>
</comment>
<comment type="subunit">
    <text evidence="1">Heterooligomer composed of large and small subunits.</text>
</comment>
<comment type="subcellular location">
    <subcellularLocation>
        <location evidence="1">Cytoplasm</location>
    </subcellularLocation>
</comment>
<comment type="similarity">
    <text evidence="1">Belongs to the XseB family.</text>
</comment>